<keyword id="KW-0224">Dipeptidase</keyword>
<keyword id="KW-0378">Hydrolase</keyword>
<keyword id="KW-0464">Manganese</keyword>
<keyword id="KW-0479">Metal-binding</keyword>
<keyword id="KW-0482">Metalloprotease</keyword>
<keyword id="KW-0645">Protease</keyword>
<comment type="function">
    <text evidence="1">Splits dipeptides with a prolyl residue in the C-terminal position.</text>
</comment>
<comment type="catalytic activity">
    <reaction evidence="1">
        <text>Xaa-L-Pro dipeptide + H2O = an L-alpha-amino acid + L-proline</text>
        <dbReference type="Rhea" id="RHEA:76407"/>
        <dbReference type="ChEBI" id="CHEBI:15377"/>
        <dbReference type="ChEBI" id="CHEBI:59869"/>
        <dbReference type="ChEBI" id="CHEBI:60039"/>
        <dbReference type="ChEBI" id="CHEBI:195196"/>
        <dbReference type="EC" id="3.4.13.9"/>
    </reaction>
</comment>
<comment type="cofactor">
    <cofactor evidence="1">
        <name>Mn(2+)</name>
        <dbReference type="ChEBI" id="CHEBI:29035"/>
    </cofactor>
    <text evidence="1">Binds 2 manganese ions per subunit.</text>
</comment>
<comment type="similarity">
    <text evidence="1">Belongs to the peptidase M24B family. Bacterial-type prolidase subfamily.</text>
</comment>
<sequence>MIQQDPGALYSDHLAVLFRRAEQALARGGFDHLVVPSGTLHYQVFDDRDYPYAVNPQFKAWLPLTRVPNSWIVFTPGKRPAVLFHQPFDYWHVVPDAPSGWWVEHFDIHIIRKPEEALALLPADPSRCAILGEPQSALGSYVPNNPAPVVNYLEWHRGSKTPYEIALMRQAQVLGVRGHRAAEAAFRNGADEFSIHMAYCQAVGQDATELPYGNIVALNEHAAVLHYTELGRKAPQPLRSFLIDAGASAHGYASDITRTYAARGHDEFAAMIAAVDAAQQQMCAAVRPGFDYKQLHVDAHLSLMGVLKDFGVIKVSPQTALETGVSAAFFPHGIGHLIGLQVHDVAGFAASDEGGRIERPAGHPYLRLTRVLEPGMVVTIEPGLYFIDMLLNEVKDAGHGDAINWDRVDFFRPYGGIRIEDEVLCTEGEADNLTRPVFAAANG</sequence>
<evidence type="ECO:0000255" key="1">
    <source>
        <dbReference type="HAMAP-Rule" id="MF_01279"/>
    </source>
</evidence>
<feature type="chain" id="PRO_1000140334" description="Xaa-Pro dipeptidase">
    <location>
        <begin position="1"/>
        <end position="443"/>
    </location>
</feature>
<feature type="binding site" evidence="1">
    <location>
        <position position="244"/>
    </location>
    <ligand>
        <name>Mn(2+)</name>
        <dbReference type="ChEBI" id="CHEBI:29035"/>
        <label>2</label>
    </ligand>
</feature>
<feature type="binding site" evidence="1">
    <location>
        <position position="255"/>
    </location>
    <ligand>
        <name>Mn(2+)</name>
        <dbReference type="ChEBI" id="CHEBI:29035"/>
        <label>1</label>
    </ligand>
</feature>
<feature type="binding site" evidence="1">
    <location>
        <position position="255"/>
    </location>
    <ligand>
        <name>Mn(2+)</name>
        <dbReference type="ChEBI" id="CHEBI:29035"/>
        <label>2</label>
    </ligand>
</feature>
<feature type="binding site" evidence="1">
    <location>
        <position position="336"/>
    </location>
    <ligand>
        <name>Mn(2+)</name>
        <dbReference type="ChEBI" id="CHEBI:29035"/>
        <label>1</label>
    </ligand>
</feature>
<feature type="binding site" evidence="1">
    <location>
        <position position="381"/>
    </location>
    <ligand>
        <name>Mn(2+)</name>
        <dbReference type="ChEBI" id="CHEBI:29035"/>
        <label>1</label>
    </ligand>
</feature>
<feature type="binding site" evidence="1">
    <location>
        <position position="420"/>
    </location>
    <ligand>
        <name>Mn(2+)</name>
        <dbReference type="ChEBI" id="CHEBI:29035"/>
        <label>1</label>
    </ligand>
</feature>
<feature type="binding site" evidence="1">
    <location>
        <position position="420"/>
    </location>
    <ligand>
        <name>Mn(2+)</name>
        <dbReference type="ChEBI" id="CHEBI:29035"/>
        <label>2</label>
    </ligand>
</feature>
<gene>
    <name evidence="1" type="primary">pepQ</name>
    <name type="ordered locus">Smal_3276</name>
</gene>
<organism>
    <name type="scientific">Stenotrophomonas maltophilia (strain R551-3)</name>
    <dbReference type="NCBI Taxonomy" id="391008"/>
    <lineage>
        <taxon>Bacteria</taxon>
        <taxon>Pseudomonadati</taxon>
        <taxon>Pseudomonadota</taxon>
        <taxon>Gammaproteobacteria</taxon>
        <taxon>Lysobacterales</taxon>
        <taxon>Lysobacteraceae</taxon>
        <taxon>Stenotrophomonas</taxon>
        <taxon>Stenotrophomonas maltophilia group</taxon>
    </lineage>
</organism>
<proteinExistence type="inferred from homology"/>
<accession>B4SI11</accession>
<dbReference type="EC" id="3.4.13.9" evidence="1"/>
<dbReference type="EMBL" id="CP001111">
    <property type="protein sequence ID" value="ACF52975.1"/>
    <property type="molecule type" value="Genomic_DNA"/>
</dbReference>
<dbReference type="RefSeq" id="WP_012512003.1">
    <property type="nucleotide sequence ID" value="NC_011071.1"/>
</dbReference>
<dbReference type="SMR" id="B4SI11"/>
<dbReference type="STRING" id="391008.Smal_3276"/>
<dbReference type="KEGG" id="smt:Smal_3276"/>
<dbReference type="eggNOG" id="COG0006">
    <property type="taxonomic scope" value="Bacteria"/>
</dbReference>
<dbReference type="HOGENOM" id="CLU_050675_0_0_6"/>
<dbReference type="OrthoDB" id="9806388at2"/>
<dbReference type="Proteomes" id="UP000001867">
    <property type="component" value="Chromosome"/>
</dbReference>
<dbReference type="GO" id="GO:0005829">
    <property type="term" value="C:cytosol"/>
    <property type="evidence" value="ECO:0007669"/>
    <property type="project" value="TreeGrafter"/>
</dbReference>
<dbReference type="GO" id="GO:0004177">
    <property type="term" value="F:aminopeptidase activity"/>
    <property type="evidence" value="ECO:0007669"/>
    <property type="project" value="TreeGrafter"/>
</dbReference>
<dbReference type="GO" id="GO:0046872">
    <property type="term" value="F:metal ion binding"/>
    <property type="evidence" value="ECO:0007669"/>
    <property type="project" value="UniProtKB-KW"/>
</dbReference>
<dbReference type="GO" id="GO:0008235">
    <property type="term" value="F:metalloexopeptidase activity"/>
    <property type="evidence" value="ECO:0007669"/>
    <property type="project" value="UniProtKB-UniRule"/>
</dbReference>
<dbReference type="GO" id="GO:0016795">
    <property type="term" value="F:phosphoric triester hydrolase activity"/>
    <property type="evidence" value="ECO:0007669"/>
    <property type="project" value="InterPro"/>
</dbReference>
<dbReference type="GO" id="GO:0102009">
    <property type="term" value="F:proline dipeptidase activity"/>
    <property type="evidence" value="ECO:0007669"/>
    <property type="project" value="UniProtKB-EC"/>
</dbReference>
<dbReference type="GO" id="GO:0006508">
    <property type="term" value="P:proteolysis"/>
    <property type="evidence" value="ECO:0007669"/>
    <property type="project" value="UniProtKB-KW"/>
</dbReference>
<dbReference type="Gene3D" id="3.90.230.10">
    <property type="entry name" value="Creatinase/methionine aminopeptidase superfamily"/>
    <property type="match status" value="1"/>
</dbReference>
<dbReference type="Gene3D" id="3.40.350.10">
    <property type="entry name" value="Creatinase/prolidase N-terminal domain"/>
    <property type="match status" value="1"/>
</dbReference>
<dbReference type="HAMAP" id="MF_01279">
    <property type="entry name" value="X_Pro_dipeptid"/>
    <property type="match status" value="1"/>
</dbReference>
<dbReference type="InterPro" id="IPR029149">
    <property type="entry name" value="Creatin/AminoP/Spt16_N"/>
</dbReference>
<dbReference type="InterPro" id="IPR036005">
    <property type="entry name" value="Creatinase/aminopeptidase-like"/>
</dbReference>
<dbReference type="InterPro" id="IPR048819">
    <property type="entry name" value="PepQ_N"/>
</dbReference>
<dbReference type="InterPro" id="IPR000994">
    <property type="entry name" value="Pept_M24"/>
</dbReference>
<dbReference type="InterPro" id="IPR001131">
    <property type="entry name" value="Peptidase_M24B_aminopep-P_CS"/>
</dbReference>
<dbReference type="InterPro" id="IPR052433">
    <property type="entry name" value="X-Pro_dipept-like"/>
</dbReference>
<dbReference type="InterPro" id="IPR022846">
    <property type="entry name" value="X_Pro_dipept"/>
</dbReference>
<dbReference type="NCBIfam" id="NF010133">
    <property type="entry name" value="PRK13607.1"/>
    <property type="match status" value="1"/>
</dbReference>
<dbReference type="PANTHER" id="PTHR43226">
    <property type="entry name" value="XAA-PRO AMINOPEPTIDASE 3"/>
    <property type="match status" value="1"/>
</dbReference>
<dbReference type="PANTHER" id="PTHR43226:SF8">
    <property type="entry name" value="XAA-PRO DIPEPTIDASE"/>
    <property type="match status" value="1"/>
</dbReference>
<dbReference type="Pfam" id="PF21216">
    <property type="entry name" value="PepQ_N"/>
    <property type="match status" value="1"/>
</dbReference>
<dbReference type="Pfam" id="PF00557">
    <property type="entry name" value="Peptidase_M24"/>
    <property type="match status" value="1"/>
</dbReference>
<dbReference type="SUPFAM" id="SSF55920">
    <property type="entry name" value="Creatinase/aminopeptidase"/>
    <property type="match status" value="1"/>
</dbReference>
<dbReference type="PROSITE" id="PS00491">
    <property type="entry name" value="PROLINE_PEPTIDASE"/>
    <property type="match status" value="1"/>
</dbReference>
<name>PEPQ_STRM5</name>
<protein>
    <recommendedName>
        <fullName evidence="1">Xaa-Pro dipeptidase</fullName>
        <shortName evidence="1">X-Pro dipeptidase</shortName>
        <ecNumber evidence="1">3.4.13.9</ecNumber>
    </recommendedName>
    <alternativeName>
        <fullName evidence="1">Imidodipeptidase</fullName>
    </alternativeName>
    <alternativeName>
        <fullName evidence="1">Proline dipeptidase</fullName>
        <shortName evidence="1">Prolidase</shortName>
    </alternativeName>
</protein>
<reference key="1">
    <citation type="submission" date="2008-06" db="EMBL/GenBank/DDBJ databases">
        <title>Complete sequence of Stenotrophomonas maltophilia R551-3.</title>
        <authorList>
            <consortium name="US DOE Joint Genome Institute"/>
            <person name="Lucas S."/>
            <person name="Copeland A."/>
            <person name="Lapidus A."/>
            <person name="Glavina del Rio T."/>
            <person name="Dalin E."/>
            <person name="Tice H."/>
            <person name="Pitluck S."/>
            <person name="Chain P."/>
            <person name="Malfatti S."/>
            <person name="Shin M."/>
            <person name="Vergez L."/>
            <person name="Lang D."/>
            <person name="Schmutz J."/>
            <person name="Larimer F."/>
            <person name="Land M."/>
            <person name="Hauser L."/>
            <person name="Kyrpides N."/>
            <person name="Mikhailova N."/>
            <person name="Taghavi S."/>
            <person name="Monchy S."/>
            <person name="Newman L."/>
            <person name="Vangronsveld J."/>
            <person name="van der Lelie D."/>
            <person name="Richardson P."/>
        </authorList>
    </citation>
    <scope>NUCLEOTIDE SEQUENCE [LARGE SCALE GENOMIC DNA]</scope>
    <source>
        <strain>R551-3</strain>
    </source>
</reference>